<keyword id="KW-1185">Reference proteome</keyword>
<keyword id="KW-0687">Ribonucleoprotein</keyword>
<keyword id="KW-0689">Ribosomal protein</keyword>
<keyword id="KW-0694">RNA-binding</keyword>
<keyword id="KW-0699">rRNA-binding</keyword>
<sequence>MPPKTRSGARRTGRRVVKKNVANGHAYIKSTFNNTIVSITDPKGAVISWASSGHVGFKGSRKSTPFAAQMAAESAARKAMDHGMKKVDVFVKGPGSGRETAIRSLSTAGLEVGTIADVTPQPHNGCRPPKRRRV</sequence>
<protein>
    <recommendedName>
        <fullName evidence="1">Small ribosomal subunit protein uS11</fullName>
    </recommendedName>
    <alternativeName>
        <fullName evidence="2">30S ribosomal protein S11</fullName>
    </alternativeName>
</protein>
<dbReference type="EMBL" id="CR931997">
    <property type="protein sequence ID" value="CAI37937.1"/>
    <property type="molecule type" value="Genomic_DNA"/>
</dbReference>
<dbReference type="RefSeq" id="WP_005291870.1">
    <property type="nucleotide sequence ID" value="NC_007164.1"/>
</dbReference>
<dbReference type="SMR" id="Q4JTC0"/>
<dbReference type="STRING" id="306537.jk1760"/>
<dbReference type="GeneID" id="92739396"/>
<dbReference type="KEGG" id="cjk:jk1760"/>
<dbReference type="eggNOG" id="COG0100">
    <property type="taxonomic scope" value="Bacteria"/>
</dbReference>
<dbReference type="HOGENOM" id="CLU_072439_5_0_11"/>
<dbReference type="OrthoDB" id="9806415at2"/>
<dbReference type="Proteomes" id="UP000000545">
    <property type="component" value="Chromosome"/>
</dbReference>
<dbReference type="GO" id="GO:1990904">
    <property type="term" value="C:ribonucleoprotein complex"/>
    <property type="evidence" value="ECO:0007669"/>
    <property type="project" value="UniProtKB-KW"/>
</dbReference>
<dbReference type="GO" id="GO:0005840">
    <property type="term" value="C:ribosome"/>
    <property type="evidence" value="ECO:0007669"/>
    <property type="project" value="UniProtKB-KW"/>
</dbReference>
<dbReference type="GO" id="GO:0019843">
    <property type="term" value="F:rRNA binding"/>
    <property type="evidence" value="ECO:0007669"/>
    <property type="project" value="UniProtKB-UniRule"/>
</dbReference>
<dbReference type="GO" id="GO:0003735">
    <property type="term" value="F:structural constituent of ribosome"/>
    <property type="evidence" value="ECO:0007669"/>
    <property type="project" value="InterPro"/>
</dbReference>
<dbReference type="GO" id="GO:0006412">
    <property type="term" value="P:translation"/>
    <property type="evidence" value="ECO:0007669"/>
    <property type="project" value="UniProtKB-UniRule"/>
</dbReference>
<dbReference type="FunFam" id="3.30.420.80:FF:000001">
    <property type="entry name" value="30S ribosomal protein S11"/>
    <property type="match status" value="1"/>
</dbReference>
<dbReference type="Gene3D" id="3.30.420.80">
    <property type="entry name" value="Ribosomal protein S11"/>
    <property type="match status" value="1"/>
</dbReference>
<dbReference type="HAMAP" id="MF_01310">
    <property type="entry name" value="Ribosomal_uS11"/>
    <property type="match status" value="1"/>
</dbReference>
<dbReference type="InterPro" id="IPR001971">
    <property type="entry name" value="Ribosomal_uS11"/>
</dbReference>
<dbReference type="InterPro" id="IPR019981">
    <property type="entry name" value="Ribosomal_uS11_bac-type"/>
</dbReference>
<dbReference type="InterPro" id="IPR018102">
    <property type="entry name" value="Ribosomal_uS11_CS"/>
</dbReference>
<dbReference type="InterPro" id="IPR036967">
    <property type="entry name" value="Ribosomal_uS11_sf"/>
</dbReference>
<dbReference type="NCBIfam" id="NF003698">
    <property type="entry name" value="PRK05309.1"/>
    <property type="match status" value="1"/>
</dbReference>
<dbReference type="NCBIfam" id="TIGR03632">
    <property type="entry name" value="uS11_bact"/>
    <property type="match status" value="1"/>
</dbReference>
<dbReference type="PANTHER" id="PTHR11759">
    <property type="entry name" value="40S RIBOSOMAL PROTEIN S14/30S RIBOSOMAL PROTEIN S11"/>
    <property type="match status" value="1"/>
</dbReference>
<dbReference type="Pfam" id="PF00411">
    <property type="entry name" value="Ribosomal_S11"/>
    <property type="match status" value="1"/>
</dbReference>
<dbReference type="PIRSF" id="PIRSF002131">
    <property type="entry name" value="Ribosomal_S11"/>
    <property type="match status" value="1"/>
</dbReference>
<dbReference type="SUPFAM" id="SSF53137">
    <property type="entry name" value="Translational machinery components"/>
    <property type="match status" value="1"/>
</dbReference>
<dbReference type="PROSITE" id="PS00054">
    <property type="entry name" value="RIBOSOMAL_S11"/>
    <property type="match status" value="1"/>
</dbReference>
<accession>Q4JTC0</accession>
<feature type="chain" id="PRO_0000230398" description="Small ribosomal subunit protein uS11">
    <location>
        <begin position="1"/>
        <end position="134"/>
    </location>
</feature>
<reference key="1">
    <citation type="journal article" date="2005" name="J. Bacteriol.">
        <title>Complete genome sequence and analysis of the multiresistant nosocomial pathogen Corynebacterium jeikeium K411, a lipid-requiring bacterium of the human skin flora.</title>
        <authorList>
            <person name="Tauch A."/>
            <person name="Kaiser O."/>
            <person name="Hain T."/>
            <person name="Goesmann A."/>
            <person name="Weisshaar B."/>
            <person name="Albersmeier A."/>
            <person name="Bekel T."/>
            <person name="Bischoff N."/>
            <person name="Brune I."/>
            <person name="Chakraborty T."/>
            <person name="Kalinowski J."/>
            <person name="Meyer F."/>
            <person name="Rupp O."/>
            <person name="Schneiker S."/>
            <person name="Viehoever P."/>
            <person name="Puehler A."/>
        </authorList>
    </citation>
    <scope>NUCLEOTIDE SEQUENCE [LARGE SCALE GENOMIC DNA]</scope>
    <source>
        <strain>K411</strain>
    </source>
</reference>
<evidence type="ECO:0000255" key="1">
    <source>
        <dbReference type="HAMAP-Rule" id="MF_01310"/>
    </source>
</evidence>
<evidence type="ECO:0000305" key="2"/>
<proteinExistence type="inferred from homology"/>
<organism>
    <name type="scientific">Corynebacterium jeikeium (strain K411)</name>
    <dbReference type="NCBI Taxonomy" id="306537"/>
    <lineage>
        <taxon>Bacteria</taxon>
        <taxon>Bacillati</taxon>
        <taxon>Actinomycetota</taxon>
        <taxon>Actinomycetes</taxon>
        <taxon>Mycobacteriales</taxon>
        <taxon>Corynebacteriaceae</taxon>
        <taxon>Corynebacterium</taxon>
    </lineage>
</organism>
<gene>
    <name evidence="1" type="primary">rpsK</name>
    <name type="ordered locus">jk1760</name>
</gene>
<name>RS11_CORJK</name>
<comment type="function">
    <text evidence="1">Located on the platform of the 30S subunit, it bridges several disparate RNA helices of the 16S rRNA. Forms part of the Shine-Dalgarno cleft in the 70S ribosome.</text>
</comment>
<comment type="subunit">
    <text evidence="1">Part of the 30S ribosomal subunit. Interacts with proteins S7 and S18. Binds to IF-3.</text>
</comment>
<comment type="similarity">
    <text evidence="1">Belongs to the universal ribosomal protein uS11 family.</text>
</comment>